<feature type="chain" id="PRO_0000298050" description="S-ribosylhomocysteine lyase">
    <location>
        <begin position="1"/>
        <end position="160"/>
    </location>
</feature>
<feature type="binding site" evidence="1">
    <location>
        <position position="57"/>
    </location>
    <ligand>
        <name>Fe cation</name>
        <dbReference type="ChEBI" id="CHEBI:24875"/>
    </ligand>
</feature>
<feature type="binding site" evidence="1">
    <location>
        <position position="61"/>
    </location>
    <ligand>
        <name>Fe cation</name>
        <dbReference type="ChEBI" id="CHEBI:24875"/>
    </ligand>
</feature>
<feature type="binding site" evidence="1">
    <location>
        <position position="127"/>
    </location>
    <ligand>
        <name>Fe cation</name>
        <dbReference type="ChEBI" id="CHEBI:24875"/>
    </ligand>
</feature>
<comment type="function">
    <text evidence="1">Involved in the synthesis of autoinducer 2 (AI-2) which is secreted by bacteria and is used to communicate both the cell density and the metabolic potential of the environment. The regulation of gene expression in response to changes in cell density is called quorum sensing. Catalyzes the transformation of S-ribosylhomocysteine (RHC) to homocysteine (HC) and 4,5-dihydroxy-2,3-pentadione (DPD).</text>
</comment>
<comment type="catalytic activity">
    <reaction evidence="1">
        <text>S-(5-deoxy-D-ribos-5-yl)-L-homocysteine = (S)-4,5-dihydroxypentane-2,3-dione + L-homocysteine</text>
        <dbReference type="Rhea" id="RHEA:17753"/>
        <dbReference type="ChEBI" id="CHEBI:29484"/>
        <dbReference type="ChEBI" id="CHEBI:58195"/>
        <dbReference type="ChEBI" id="CHEBI:58199"/>
        <dbReference type="EC" id="4.4.1.21"/>
    </reaction>
</comment>
<comment type="cofactor">
    <cofactor evidence="1">
        <name>Fe cation</name>
        <dbReference type="ChEBI" id="CHEBI:24875"/>
    </cofactor>
    <text evidence="1">Binds 1 Fe cation per subunit.</text>
</comment>
<comment type="subunit">
    <text evidence="1">Homodimer.</text>
</comment>
<comment type="similarity">
    <text evidence="1">Belongs to the LuxS family.</text>
</comment>
<comment type="sequence caution" evidence="2">
    <conflict type="erroneous initiation">
        <sequence resource="EMBL-CDS" id="ABP91565"/>
    </conflict>
</comment>
<evidence type="ECO:0000255" key="1">
    <source>
        <dbReference type="HAMAP-Rule" id="MF_00091"/>
    </source>
</evidence>
<evidence type="ECO:0000305" key="2"/>
<gene>
    <name evidence="1" type="primary">luxS</name>
    <name type="ordered locus">SSU98_0407</name>
</gene>
<keyword id="KW-0071">Autoinducer synthesis</keyword>
<keyword id="KW-0408">Iron</keyword>
<keyword id="KW-0456">Lyase</keyword>
<keyword id="KW-0479">Metal-binding</keyword>
<keyword id="KW-0673">Quorum sensing</keyword>
<accession>A4VZM6</accession>
<protein>
    <recommendedName>
        <fullName evidence="1">S-ribosylhomocysteine lyase</fullName>
        <ecNumber evidence="1">4.4.1.21</ecNumber>
    </recommendedName>
    <alternativeName>
        <fullName evidence="1">AI-2 synthesis protein</fullName>
    </alternativeName>
    <alternativeName>
        <fullName evidence="1">Autoinducer-2 production protein LuxS</fullName>
    </alternativeName>
</protein>
<proteinExistence type="inferred from homology"/>
<sequence>MKKEVTVESFELDHTIVKAPYIRLISEEVGPKGDIITNFDIRLIQPNENAMDTAGLHTIEHLLAKLIRQRIDGLIDCSPFGCRTGFHMIMWGKQDSEKIAQVIKSSLEEIAEGITWEDVPGTTIESCGNYKDHSLHSAKEWAKLILSQGISTDAFERKPI</sequence>
<name>LUXS_STRS2</name>
<organism>
    <name type="scientific">Streptococcus suis (strain 98HAH33)</name>
    <dbReference type="NCBI Taxonomy" id="391296"/>
    <lineage>
        <taxon>Bacteria</taxon>
        <taxon>Bacillati</taxon>
        <taxon>Bacillota</taxon>
        <taxon>Bacilli</taxon>
        <taxon>Lactobacillales</taxon>
        <taxon>Streptococcaceae</taxon>
        <taxon>Streptococcus</taxon>
    </lineage>
</organism>
<dbReference type="EC" id="4.4.1.21" evidence="1"/>
<dbReference type="EMBL" id="CP000408">
    <property type="protein sequence ID" value="ABP91565.1"/>
    <property type="status" value="ALT_INIT"/>
    <property type="molecule type" value="Genomic_DNA"/>
</dbReference>
<dbReference type="SMR" id="A4VZM6"/>
<dbReference type="KEGG" id="ssv:SSU98_0407"/>
<dbReference type="HOGENOM" id="CLU_107531_2_1_9"/>
<dbReference type="GO" id="GO:0005506">
    <property type="term" value="F:iron ion binding"/>
    <property type="evidence" value="ECO:0007669"/>
    <property type="project" value="InterPro"/>
</dbReference>
<dbReference type="GO" id="GO:0043768">
    <property type="term" value="F:S-ribosylhomocysteine lyase activity"/>
    <property type="evidence" value="ECO:0007669"/>
    <property type="project" value="UniProtKB-UniRule"/>
</dbReference>
<dbReference type="GO" id="GO:0009372">
    <property type="term" value="P:quorum sensing"/>
    <property type="evidence" value="ECO:0007669"/>
    <property type="project" value="UniProtKB-UniRule"/>
</dbReference>
<dbReference type="Gene3D" id="3.30.1360.80">
    <property type="entry name" value="S-ribosylhomocysteinase (LuxS)"/>
    <property type="match status" value="1"/>
</dbReference>
<dbReference type="HAMAP" id="MF_00091">
    <property type="entry name" value="LuxS"/>
    <property type="match status" value="1"/>
</dbReference>
<dbReference type="InterPro" id="IPR037005">
    <property type="entry name" value="LuxS_sf"/>
</dbReference>
<dbReference type="InterPro" id="IPR011249">
    <property type="entry name" value="Metalloenz_LuxS/M16"/>
</dbReference>
<dbReference type="InterPro" id="IPR003815">
    <property type="entry name" value="S-ribosylhomocysteinase"/>
</dbReference>
<dbReference type="NCBIfam" id="NF002607">
    <property type="entry name" value="PRK02260.2-5"/>
    <property type="match status" value="1"/>
</dbReference>
<dbReference type="NCBIfam" id="NF002608">
    <property type="entry name" value="PRK02260.3-1"/>
    <property type="match status" value="1"/>
</dbReference>
<dbReference type="PANTHER" id="PTHR35799">
    <property type="entry name" value="S-RIBOSYLHOMOCYSTEINE LYASE"/>
    <property type="match status" value="1"/>
</dbReference>
<dbReference type="PANTHER" id="PTHR35799:SF1">
    <property type="entry name" value="S-RIBOSYLHOMOCYSTEINE LYASE"/>
    <property type="match status" value="1"/>
</dbReference>
<dbReference type="Pfam" id="PF02664">
    <property type="entry name" value="LuxS"/>
    <property type="match status" value="1"/>
</dbReference>
<dbReference type="PIRSF" id="PIRSF006160">
    <property type="entry name" value="AI2"/>
    <property type="match status" value="1"/>
</dbReference>
<dbReference type="PRINTS" id="PR01487">
    <property type="entry name" value="LUXSPROTEIN"/>
</dbReference>
<dbReference type="SUPFAM" id="SSF63411">
    <property type="entry name" value="LuxS/MPP-like metallohydrolase"/>
    <property type="match status" value="1"/>
</dbReference>
<reference key="1">
    <citation type="journal article" date="2007" name="PLoS ONE">
        <title>A glimpse of streptococcal toxic shock syndrome from comparative genomics of S. suis 2 Chinese isolates.</title>
        <authorList>
            <person name="Chen C."/>
            <person name="Tang J."/>
            <person name="Dong W."/>
            <person name="Wang C."/>
            <person name="Feng Y."/>
            <person name="Wang J."/>
            <person name="Zheng F."/>
            <person name="Pan X."/>
            <person name="Liu D."/>
            <person name="Li M."/>
            <person name="Song Y."/>
            <person name="Zhu X."/>
            <person name="Sun H."/>
            <person name="Feng T."/>
            <person name="Guo Z."/>
            <person name="Ju A."/>
            <person name="Ge J."/>
            <person name="Dong Y."/>
            <person name="Sun W."/>
            <person name="Jiang Y."/>
            <person name="Wang J."/>
            <person name="Yan J."/>
            <person name="Yang H."/>
            <person name="Wang X."/>
            <person name="Gao G.F."/>
            <person name="Yang R."/>
            <person name="Wang J."/>
            <person name="Yu J."/>
        </authorList>
    </citation>
    <scope>NUCLEOTIDE SEQUENCE [LARGE SCALE GENOMIC DNA]</scope>
    <source>
        <strain>98HAH33</strain>
    </source>
</reference>